<keyword id="KW-1185">Reference proteome</keyword>
<evidence type="ECO:0000305" key="1"/>
<name>YPPC_BACSU</name>
<feature type="chain" id="PRO_0000049717" description="Uncharacterized protein YppC">
    <location>
        <begin position="1"/>
        <end position="320"/>
    </location>
</feature>
<reference key="1">
    <citation type="journal article" date="1996" name="Microbiology">
        <title>Sequence analysis of the Bacillus subtilis chromosome region between the serA and kdg loci cloned in a yeast artificial chromosome.</title>
        <authorList>
            <person name="Sorokin A.V."/>
            <person name="Azevedo V."/>
            <person name="Zumstein E."/>
            <person name="Galleron N."/>
            <person name="Ehrlich S.D."/>
            <person name="Serror P."/>
        </authorList>
    </citation>
    <scope>NUCLEOTIDE SEQUENCE [GENOMIC DNA]</scope>
    <source>
        <strain>168 / Marburg / ATCC 6051 / DSM 10 / JCM 1465 / NBRC 13719 / NCIMB 3610 / NRRL NRS-744 / VKM B-501</strain>
    </source>
</reference>
<reference key="2">
    <citation type="journal article" date="1997" name="Nature">
        <title>The complete genome sequence of the Gram-positive bacterium Bacillus subtilis.</title>
        <authorList>
            <person name="Kunst F."/>
            <person name="Ogasawara N."/>
            <person name="Moszer I."/>
            <person name="Albertini A.M."/>
            <person name="Alloni G."/>
            <person name="Azevedo V."/>
            <person name="Bertero M.G."/>
            <person name="Bessieres P."/>
            <person name="Bolotin A."/>
            <person name="Borchert S."/>
            <person name="Borriss R."/>
            <person name="Boursier L."/>
            <person name="Brans A."/>
            <person name="Braun M."/>
            <person name="Brignell S.C."/>
            <person name="Bron S."/>
            <person name="Brouillet S."/>
            <person name="Bruschi C.V."/>
            <person name="Caldwell B."/>
            <person name="Capuano V."/>
            <person name="Carter N.M."/>
            <person name="Choi S.-K."/>
            <person name="Codani J.-J."/>
            <person name="Connerton I.F."/>
            <person name="Cummings N.J."/>
            <person name="Daniel R.A."/>
            <person name="Denizot F."/>
            <person name="Devine K.M."/>
            <person name="Duesterhoeft A."/>
            <person name="Ehrlich S.D."/>
            <person name="Emmerson P.T."/>
            <person name="Entian K.-D."/>
            <person name="Errington J."/>
            <person name="Fabret C."/>
            <person name="Ferrari E."/>
            <person name="Foulger D."/>
            <person name="Fritz C."/>
            <person name="Fujita M."/>
            <person name="Fujita Y."/>
            <person name="Fuma S."/>
            <person name="Galizzi A."/>
            <person name="Galleron N."/>
            <person name="Ghim S.-Y."/>
            <person name="Glaser P."/>
            <person name="Goffeau A."/>
            <person name="Golightly E.J."/>
            <person name="Grandi G."/>
            <person name="Guiseppi G."/>
            <person name="Guy B.J."/>
            <person name="Haga K."/>
            <person name="Haiech J."/>
            <person name="Harwood C.R."/>
            <person name="Henaut A."/>
            <person name="Hilbert H."/>
            <person name="Holsappel S."/>
            <person name="Hosono S."/>
            <person name="Hullo M.-F."/>
            <person name="Itaya M."/>
            <person name="Jones L.-M."/>
            <person name="Joris B."/>
            <person name="Karamata D."/>
            <person name="Kasahara Y."/>
            <person name="Klaerr-Blanchard M."/>
            <person name="Klein C."/>
            <person name="Kobayashi Y."/>
            <person name="Koetter P."/>
            <person name="Koningstein G."/>
            <person name="Krogh S."/>
            <person name="Kumano M."/>
            <person name="Kurita K."/>
            <person name="Lapidus A."/>
            <person name="Lardinois S."/>
            <person name="Lauber J."/>
            <person name="Lazarevic V."/>
            <person name="Lee S.-M."/>
            <person name="Levine A."/>
            <person name="Liu H."/>
            <person name="Masuda S."/>
            <person name="Mauel C."/>
            <person name="Medigue C."/>
            <person name="Medina N."/>
            <person name="Mellado R.P."/>
            <person name="Mizuno M."/>
            <person name="Moestl D."/>
            <person name="Nakai S."/>
            <person name="Noback M."/>
            <person name="Noone D."/>
            <person name="O'Reilly M."/>
            <person name="Ogawa K."/>
            <person name="Ogiwara A."/>
            <person name="Oudega B."/>
            <person name="Park S.-H."/>
            <person name="Parro V."/>
            <person name="Pohl T.M."/>
            <person name="Portetelle D."/>
            <person name="Porwollik S."/>
            <person name="Prescott A.M."/>
            <person name="Presecan E."/>
            <person name="Pujic P."/>
            <person name="Purnelle B."/>
            <person name="Rapoport G."/>
            <person name="Rey M."/>
            <person name="Reynolds S."/>
            <person name="Rieger M."/>
            <person name="Rivolta C."/>
            <person name="Rocha E."/>
            <person name="Roche B."/>
            <person name="Rose M."/>
            <person name="Sadaie Y."/>
            <person name="Sato T."/>
            <person name="Scanlan E."/>
            <person name="Schleich S."/>
            <person name="Schroeter R."/>
            <person name="Scoffone F."/>
            <person name="Sekiguchi J."/>
            <person name="Sekowska A."/>
            <person name="Seror S.J."/>
            <person name="Serror P."/>
            <person name="Shin B.-S."/>
            <person name="Soldo B."/>
            <person name="Sorokin A."/>
            <person name="Tacconi E."/>
            <person name="Takagi T."/>
            <person name="Takahashi H."/>
            <person name="Takemaru K."/>
            <person name="Takeuchi M."/>
            <person name="Tamakoshi A."/>
            <person name="Tanaka T."/>
            <person name="Terpstra P."/>
            <person name="Tognoni A."/>
            <person name="Tosato V."/>
            <person name="Uchiyama S."/>
            <person name="Vandenbol M."/>
            <person name="Vannier F."/>
            <person name="Vassarotti A."/>
            <person name="Viari A."/>
            <person name="Wambutt R."/>
            <person name="Wedler E."/>
            <person name="Wedler H."/>
            <person name="Weitzenegger T."/>
            <person name="Winters P."/>
            <person name="Wipat A."/>
            <person name="Yamamoto H."/>
            <person name="Yamane K."/>
            <person name="Yasumoto K."/>
            <person name="Yata K."/>
            <person name="Yoshida K."/>
            <person name="Yoshikawa H.-F."/>
            <person name="Zumstein E."/>
            <person name="Yoshikawa H."/>
            <person name="Danchin A."/>
        </authorList>
    </citation>
    <scope>NUCLEOTIDE SEQUENCE [LARGE SCALE GENOMIC DNA]</scope>
    <source>
        <strain>168</strain>
    </source>
</reference>
<reference key="3">
    <citation type="journal article" date="1995" name="J. Bacteriol.">
        <title>Cloning, nucleotide sequence, and mutagenesis of the Bacillus subtilis ponA operon, which codes for penicillin-binding protein (PBP) 1 and a PBP-related factor.</title>
        <authorList>
            <person name="Popham D.L."/>
            <person name="Setlow P."/>
        </authorList>
    </citation>
    <scope>NUCLEOTIDE SEQUENCE [GENOMIC DNA] OF 1-214</scope>
    <source>
        <strain>168</strain>
    </source>
</reference>
<dbReference type="EMBL" id="L47838">
    <property type="protein sequence ID" value="AAB38461.1"/>
    <property type="molecule type" value="Genomic_DNA"/>
</dbReference>
<dbReference type="EMBL" id="AL009126">
    <property type="protein sequence ID" value="CAB14146.1"/>
    <property type="molecule type" value="Genomic_DNA"/>
</dbReference>
<dbReference type="EMBL" id="U11883">
    <property type="protein sequence ID" value="AAA64945.1"/>
    <property type="status" value="ALT_INIT"/>
    <property type="molecule type" value="Genomic_DNA"/>
</dbReference>
<dbReference type="PIR" id="H69939">
    <property type="entry name" value="H69939"/>
</dbReference>
<dbReference type="RefSeq" id="NP_390111.1">
    <property type="nucleotide sequence ID" value="NC_000964.3"/>
</dbReference>
<dbReference type="RefSeq" id="WP_004398707.1">
    <property type="nucleotide sequence ID" value="NZ_OZ025638.1"/>
</dbReference>
<dbReference type="FunCoup" id="P39791">
    <property type="interactions" value="17"/>
</dbReference>
<dbReference type="STRING" id="224308.BSU22300"/>
<dbReference type="PaxDb" id="224308-BSU22300"/>
<dbReference type="EnsemblBacteria" id="CAB14146">
    <property type="protein sequence ID" value="CAB14146"/>
    <property type="gene ID" value="BSU_22300"/>
</dbReference>
<dbReference type="GeneID" id="939043"/>
<dbReference type="KEGG" id="bsu:BSU22300"/>
<dbReference type="PATRIC" id="fig|224308.179.peg.2434"/>
<dbReference type="eggNOG" id="ENOG502ZB0U">
    <property type="taxonomic scope" value="Bacteria"/>
</dbReference>
<dbReference type="InParanoid" id="P39791"/>
<dbReference type="OrthoDB" id="2690514at2"/>
<dbReference type="BioCyc" id="BSUB:BSU22300-MONOMER"/>
<dbReference type="Proteomes" id="UP000001570">
    <property type="component" value="Chromosome"/>
</dbReference>
<dbReference type="InterPro" id="IPR019658">
    <property type="entry name" value="DUF2515"/>
</dbReference>
<dbReference type="Pfam" id="PF10720">
    <property type="entry name" value="DUF2515"/>
    <property type="match status" value="1"/>
</dbReference>
<organism>
    <name type="scientific">Bacillus subtilis (strain 168)</name>
    <dbReference type="NCBI Taxonomy" id="224308"/>
    <lineage>
        <taxon>Bacteria</taxon>
        <taxon>Bacillati</taxon>
        <taxon>Bacillota</taxon>
        <taxon>Bacilli</taxon>
        <taxon>Bacillales</taxon>
        <taxon>Bacillaceae</taxon>
        <taxon>Bacillus</taxon>
    </lineage>
</organism>
<gene>
    <name type="primary">yppC</name>
    <name type="ordered locus">BSU22300</name>
</gene>
<protein>
    <recommendedName>
        <fullName>Uncharacterized protein YppC</fullName>
    </recommendedName>
    <alternativeName>
        <fullName>ORFX</fullName>
    </alternativeName>
</protein>
<sequence length="320" mass="38538">MNVQEQQAIRKLLSRIERQTKMKNADNISRTNAYKAFYDRHPEIKWSLLASFVSRNAGWSMTDLKGSLFQLGLRERQQKWFFLAYERANWLIFSDAYPQLLLYHWSKRVGKPLFHLLHVFGVSQFMSEEWTRFWHERNTERLMYALIINEQNTIQTPIIQNPSFKKNVFDTIPFYLSDWFHFNTVIFPSSNGFFYGISVKRFSKAEERIRLGKQLSQLLFKPELFSSFYHFLHTVPHTGSRFDMEKMIGITKRTSPMLRTCYPELIHSLDGTKTDWFHGKIKKTFFRREELPKQIELTDWYLHKKRQLHALFAVEQWLKK</sequence>
<proteinExistence type="predicted"/>
<comment type="sequence caution" evidence="1">
    <conflict type="erroneous initiation">
        <sequence resource="EMBL-CDS" id="AAA64945"/>
    </conflict>
</comment>
<accession>P39791</accession>